<dbReference type="EC" id="6.2.1.48" evidence="1"/>
<dbReference type="EMBL" id="AE017220">
    <property type="protein sequence ID" value="AAX63971.1"/>
    <property type="molecule type" value="Genomic_DNA"/>
</dbReference>
<dbReference type="RefSeq" id="WP_011264179.1">
    <property type="nucleotide sequence ID" value="NC_006905.1"/>
</dbReference>
<dbReference type="SMR" id="Q57TJ0"/>
<dbReference type="KEGG" id="sec:SCH_0065"/>
<dbReference type="HOGENOM" id="CLU_000022_59_0_6"/>
<dbReference type="UniPathway" id="UPA00117"/>
<dbReference type="Proteomes" id="UP000000538">
    <property type="component" value="Chromosome"/>
</dbReference>
<dbReference type="GO" id="GO:0051108">
    <property type="term" value="F:carnitine-CoA ligase activity"/>
    <property type="evidence" value="ECO:0007669"/>
    <property type="project" value="InterPro"/>
</dbReference>
<dbReference type="GO" id="GO:0051109">
    <property type="term" value="F:crotonobetaine-CoA ligase activity"/>
    <property type="evidence" value="ECO:0007669"/>
    <property type="project" value="InterPro"/>
</dbReference>
<dbReference type="GO" id="GO:0031956">
    <property type="term" value="F:medium-chain fatty acid-CoA ligase activity"/>
    <property type="evidence" value="ECO:0007669"/>
    <property type="project" value="TreeGrafter"/>
</dbReference>
<dbReference type="GO" id="GO:0009437">
    <property type="term" value="P:carnitine metabolic process"/>
    <property type="evidence" value="ECO:0007669"/>
    <property type="project" value="UniProtKB-UniRule"/>
</dbReference>
<dbReference type="GO" id="GO:0006631">
    <property type="term" value="P:fatty acid metabolic process"/>
    <property type="evidence" value="ECO:0007669"/>
    <property type="project" value="TreeGrafter"/>
</dbReference>
<dbReference type="CDD" id="cd05934">
    <property type="entry name" value="FACL_DitJ_like"/>
    <property type="match status" value="1"/>
</dbReference>
<dbReference type="FunFam" id="3.30.300.30:FF:000011">
    <property type="entry name" value="Crotonobetaine/carnitine--CoA ligase"/>
    <property type="match status" value="1"/>
</dbReference>
<dbReference type="Gene3D" id="3.30.300.30">
    <property type="match status" value="1"/>
</dbReference>
<dbReference type="Gene3D" id="3.40.50.12780">
    <property type="entry name" value="N-terminal domain of ligase-like"/>
    <property type="match status" value="1"/>
</dbReference>
<dbReference type="HAMAP" id="MF_01524">
    <property type="entry name" value="CaiC"/>
    <property type="match status" value="1"/>
</dbReference>
<dbReference type="InterPro" id="IPR025110">
    <property type="entry name" value="AMP-bd_C"/>
</dbReference>
<dbReference type="InterPro" id="IPR045851">
    <property type="entry name" value="AMP-bd_C_sf"/>
</dbReference>
<dbReference type="InterPro" id="IPR020845">
    <property type="entry name" value="AMP-binding_CS"/>
</dbReference>
<dbReference type="InterPro" id="IPR000873">
    <property type="entry name" value="AMP-dep_synth/lig_dom"/>
</dbReference>
<dbReference type="InterPro" id="IPR042099">
    <property type="entry name" value="ANL_N_sf"/>
</dbReference>
<dbReference type="InterPro" id="IPR023456">
    <property type="entry name" value="CaiC"/>
</dbReference>
<dbReference type="NCBIfam" id="NF005947">
    <property type="entry name" value="PRK08008.1"/>
    <property type="match status" value="1"/>
</dbReference>
<dbReference type="PANTHER" id="PTHR43201">
    <property type="entry name" value="ACYL-COA SYNTHETASE"/>
    <property type="match status" value="1"/>
</dbReference>
<dbReference type="PANTHER" id="PTHR43201:SF5">
    <property type="entry name" value="MEDIUM-CHAIN ACYL-COA LIGASE ACSF2, MITOCHONDRIAL"/>
    <property type="match status" value="1"/>
</dbReference>
<dbReference type="Pfam" id="PF00501">
    <property type="entry name" value="AMP-binding"/>
    <property type="match status" value="1"/>
</dbReference>
<dbReference type="Pfam" id="PF13193">
    <property type="entry name" value="AMP-binding_C"/>
    <property type="match status" value="1"/>
</dbReference>
<dbReference type="SUPFAM" id="SSF56801">
    <property type="entry name" value="Acetyl-CoA synthetase-like"/>
    <property type="match status" value="1"/>
</dbReference>
<dbReference type="PROSITE" id="PS00455">
    <property type="entry name" value="AMP_BINDING"/>
    <property type="match status" value="1"/>
</dbReference>
<protein>
    <recommendedName>
        <fullName evidence="1">Crotonobetaine/carnitine--CoA ligase</fullName>
        <ecNumber evidence="1">6.2.1.48</ecNumber>
    </recommendedName>
</protein>
<evidence type="ECO:0000255" key="1">
    <source>
        <dbReference type="HAMAP-Rule" id="MF_01524"/>
    </source>
</evidence>
<sequence length="517" mass="58329">MDIVGGQNLRQMWDDLAGVYGDKTALIFESCEGIVRQFSYASLNEEINRTANLFYSLGIRKGDRVALHLDNCPEFIFCWFGLAKIGAIMVPINARLLGEESAWILQNSQVSLLVTSVQFYPMYREIRQDNSTPLNHICLIGEQLPADDGVSHFSQLQARQSATLCYTPALSTDDTAEILFTSGTTSRPKGVVITHYNLRFAGYYSAWQIALRDDDVYMTVMPAFHIDCQCTAAMPAFSAGSTFVLLEKYSARAFWDQVRRYQATVTECIPMMIRTLMVQPAAPTDRQHHLREVMFYLNLSAQEKDAFTERFGVRLLTSYGMTETIVGIIGDRPGDKRRWPSIGRVGFSYEAEIRDDQNRPLPAGEIGEICIKGIPGKTIFKEYYMQPEATAGALEPEGWLHTGDSGYQDEDGYFYFVDRRCNMIKRGGENVSCVELENIISAHPKIQDIVVVGIKDAIRDEAIKAFIVLNEGETLSEAEFFSFCENNMAKFKVPSFMEIRTDLPRNCSGKIIKKNLK</sequence>
<name>CAIC_SALCH</name>
<comment type="function">
    <text evidence="1">Catalyzes the transfer of CoA to carnitine, generating the initial carnitinyl-CoA needed for the CaiB reaction cycle. Also has activity toward crotonobetaine and gamma-butyrobetaine.</text>
</comment>
<comment type="catalytic activity">
    <reaction evidence="1">
        <text>4-(trimethylamino)butanoate + ATP + CoA = 4-(trimethylamino)butanoyl-CoA + AMP + diphosphate</text>
        <dbReference type="Rhea" id="RHEA:55960"/>
        <dbReference type="ChEBI" id="CHEBI:16244"/>
        <dbReference type="ChEBI" id="CHEBI:30616"/>
        <dbReference type="ChEBI" id="CHEBI:33019"/>
        <dbReference type="ChEBI" id="CHEBI:57287"/>
        <dbReference type="ChEBI" id="CHEBI:61513"/>
        <dbReference type="ChEBI" id="CHEBI:456215"/>
        <dbReference type="EC" id="6.2.1.48"/>
    </reaction>
</comment>
<comment type="catalytic activity">
    <reaction evidence="1">
        <text>crotonobetaine + ATP + CoA = crotonobetainyl-CoA + AMP + diphosphate</text>
        <dbReference type="Rhea" id="RHEA:30079"/>
        <dbReference type="ChEBI" id="CHEBI:17237"/>
        <dbReference type="ChEBI" id="CHEBI:30616"/>
        <dbReference type="ChEBI" id="CHEBI:33019"/>
        <dbReference type="ChEBI" id="CHEBI:57287"/>
        <dbReference type="ChEBI" id="CHEBI:60933"/>
        <dbReference type="ChEBI" id="CHEBI:456215"/>
        <dbReference type="EC" id="6.2.1.48"/>
    </reaction>
</comment>
<comment type="catalytic activity">
    <reaction evidence="1">
        <text>(R)-carnitine + ATP + CoA = (R)-carnitinyl-CoA + AMP + diphosphate</text>
        <dbReference type="Rhea" id="RHEA:28514"/>
        <dbReference type="ChEBI" id="CHEBI:16347"/>
        <dbReference type="ChEBI" id="CHEBI:30616"/>
        <dbReference type="ChEBI" id="CHEBI:33019"/>
        <dbReference type="ChEBI" id="CHEBI:57287"/>
        <dbReference type="ChEBI" id="CHEBI:60932"/>
        <dbReference type="ChEBI" id="CHEBI:456215"/>
        <dbReference type="EC" id="6.2.1.48"/>
    </reaction>
</comment>
<comment type="pathway">
    <text evidence="1">Amine and polyamine metabolism; carnitine metabolism.</text>
</comment>
<comment type="similarity">
    <text evidence="1">Belongs to the ATP-dependent AMP-binding enzyme family.</text>
</comment>
<gene>
    <name evidence="1" type="primary">caiC</name>
    <name type="ordered locus">SCH_0065</name>
</gene>
<feature type="chain" id="PRO_0000193069" description="Crotonobetaine/carnitine--CoA ligase">
    <location>
        <begin position="1"/>
        <end position="517"/>
    </location>
</feature>
<proteinExistence type="inferred from homology"/>
<accession>Q57TJ0</accession>
<keyword id="KW-0436">Ligase</keyword>
<organism>
    <name type="scientific">Salmonella choleraesuis (strain SC-B67)</name>
    <dbReference type="NCBI Taxonomy" id="321314"/>
    <lineage>
        <taxon>Bacteria</taxon>
        <taxon>Pseudomonadati</taxon>
        <taxon>Pseudomonadota</taxon>
        <taxon>Gammaproteobacteria</taxon>
        <taxon>Enterobacterales</taxon>
        <taxon>Enterobacteriaceae</taxon>
        <taxon>Salmonella</taxon>
    </lineage>
</organism>
<reference key="1">
    <citation type="journal article" date="2005" name="Nucleic Acids Res.">
        <title>The genome sequence of Salmonella enterica serovar Choleraesuis, a highly invasive and resistant zoonotic pathogen.</title>
        <authorList>
            <person name="Chiu C.-H."/>
            <person name="Tang P."/>
            <person name="Chu C."/>
            <person name="Hu S."/>
            <person name="Bao Q."/>
            <person name="Yu J."/>
            <person name="Chou Y.-Y."/>
            <person name="Wang H.-S."/>
            <person name="Lee Y.-S."/>
        </authorList>
    </citation>
    <scope>NUCLEOTIDE SEQUENCE [LARGE SCALE GENOMIC DNA]</scope>
    <source>
        <strain>SC-B67</strain>
    </source>
</reference>